<reference evidence="8" key="1">
    <citation type="journal article" date="2002" name="Nat. Neurosci.">
        <title>The olfactory receptor gene superfamily of the mouse.</title>
        <authorList>
            <person name="Zhang X."/>
            <person name="Firestein S."/>
        </authorList>
    </citation>
    <scope>NUCLEOTIDE SEQUENCE [GENOMIC DNA]</scope>
</reference>
<reference evidence="9" key="2">
    <citation type="journal article" date="2003" name="Genome Biol.">
        <title>Odorant receptor expressed sequence tags demonstrate olfactory expression of over 400 genes, extensive alternate splicing and unequal expression levels.</title>
        <authorList>
            <person name="Young J.M."/>
            <person name="Shykind B.M."/>
            <person name="Lane R.P."/>
            <person name="Tonnes-Priddy L."/>
            <person name="Ross J.A."/>
            <person name="Walker M."/>
            <person name="Williams E.M."/>
            <person name="Trask B.J."/>
        </authorList>
    </citation>
    <scope>NUCLEOTIDE SEQUENCE [GENOMIC DNA]</scope>
</reference>
<reference key="3">
    <citation type="journal article" date="2009" name="PLoS Biol.">
        <title>Lineage-specific biology revealed by a finished genome assembly of the mouse.</title>
        <authorList>
            <person name="Church D.M."/>
            <person name="Goodstadt L."/>
            <person name="Hillier L.W."/>
            <person name="Zody M.C."/>
            <person name="Goldstein S."/>
            <person name="She X."/>
            <person name="Bult C.J."/>
            <person name="Agarwala R."/>
            <person name="Cherry J.L."/>
            <person name="DiCuccio M."/>
            <person name="Hlavina W."/>
            <person name="Kapustin Y."/>
            <person name="Meric P."/>
            <person name="Maglott D."/>
            <person name="Birtle Z."/>
            <person name="Marques A.C."/>
            <person name="Graves T."/>
            <person name="Zhou S."/>
            <person name="Teague B."/>
            <person name="Potamousis K."/>
            <person name="Churas C."/>
            <person name="Place M."/>
            <person name="Herschleb J."/>
            <person name="Runnheim R."/>
            <person name="Forrest D."/>
            <person name="Amos-Landgraf J."/>
            <person name="Schwartz D.C."/>
            <person name="Cheng Z."/>
            <person name="Lindblad-Toh K."/>
            <person name="Eichler E.E."/>
            <person name="Ponting C.P."/>
        </authorList>
    </citation>
    <scope>NUCLEOTIDE SEQUENCE [LARGE SCALE GENOMIC DNA]</scope>
    <source>
        <strain>C57BL/6J</strain>
    </source>
</reference>
<reference evidence="10" key="4">
    <citation type="submission" date="2005-07" db="EMBL/GenBank/DDBJ databases">
        <authorList>
            <person name="Mural R.J."/>
            <person name="Adams M.D."/>
            <person name="Myers E.W."/>
            <person name="Smith H.O."/>
            <person name="Venter J.C."/>
        </authorList>
    </citation>
    <scope>NUCLEOTIDE SEQUENCE [LARGE SCALE GENOMIC DNA]</scope>
</reference>
<reference evidence="7" key="5">
    <citation type="journal article" date="2004" name="Genome Res.">
        <title>The status, quality, and expansion of the NIH full-length cDNA project: the Mammalian Gene Collection (MGC).</title>
        <authorList>
            <consortium name="The MGC Project Team"/>
        </authorList>
    </citation>
    <scope>NUCLEOTIDE SEQUENCE [LARGE SCALE MRNA]</scope>
</reference>
<reference evidence="5 6" key="6">
    <citation type="journal article" date="1998" name="Cell">
        <title>Identification of ligands for olfactory receptors by functional expression of a receptor library.</title>
        <authorList>
            <person name="Krautwurst D."/>
            <person name="Yau K.W."/>
            <person name="Reed R.R."/>
        </authorList>
    </citation>
    <scope>NUCLEOTIDE SEQUENCE [MRNA] OF 64-286</scope>
    <scope>FUNCTION</scope>
    <source>
        <strain evidence="3">C57BL/6J</strain>
        <tissue evidence="6">Olfactory epithelium</tissue>
    </source>
</reference>
<sequence>MMKSNQSTVSEFILLGLPIQPEDQAVYFALFLAMYLTTVLGNLLIILLIRLDSHLHTPMYFFLSHLAFTDISFSSVTAPKMLMNMLTHSQSISHAGCVSQIYFFLLFGCIDNFLLTSMAYDRYVAICHPLHYTTIMSQSLCVLLVMVSWAFSSSNGLVHTLLFARLSLFRDNTVHHFFCDLSALLKLSSSDTTINELVILTLAVVVITVPFICILVSYGHIGATILRTPSIKGICKALSTCGSHLCVVSLYYGAIIGLYFFPSSNNTNDKDVIVAVLYTVVTPMLNPFIYSLRNRDINGALRKTLSRRLCSH</sequence>
<dbReference type="EMBL" id="AY073142">
    <property type="protein sequence ID" value="AAL60805.1"/>
    <property type="molecule type" value="Genomic_DNA"/>
</dbReference>
<dbReference type="EMBL" id="AY317443">
    <property type="protein sequence ID" value="AAP70882.1"/>
    <property type="molecule type" value="Genomic_DNA"/>
</dbReference>
<dbReference type="EMBL" id="AL732452">
    <property type="status" value="NOT_ANNOTATED_CDS"/>
    <property type="molecule type" value="Genomic_DNA"/>
</dbReference>
<dbReference type="EMBL" id="CH466542">
    <property type="protein sequence ID" value="EDL08685.1"/>
    <property type="molecule type" value="Genomic_DNA"/>
</dbReference>
<dbReference type="EMBL" id="BC127978">
    <property type="protein sequence ID" value="AAI27979.1"/>
    <property type="molecule type" value="mRNA"/>
</dbReference>
<dbReference type="EMBL" id="AF102524">
    <property type="protein sequence ID" value="AAD13316.1"/>
    <property type="molecule type" value="mRNA"/>
</dbReference>
<dbReference type="CCDS" id="CCDS15981.1"/>
<dbReference type="RefSeq" id="NP_667157.1">
    <property type="nucleotide sequence ID" value="NM_146946.1"/>
</dbReference>
<dbReference type="SMR" id="Q8VGK5"/>
<dbReference type="FunCoup" id="Q8VGK5">
    <property type="interactions" value="1287"/>
</dbReference>
<dbReference type="STRING" id="10090.ENSMUSP00000149648"/>
<dbReference type="PaxDb" id="10090-ENSMUSP00000071985"/>
<dbReference type="DNASU" id="18350"/>
<dbReference type="Ensembl" id="ENSMUST00000112950.3">
    <property type="protein sequence ID" value="ENSMUSP00000108572.3"/>
    <property type="gene ID" value="ENSMUSG00000111021.3"/>
</dbReference>
<dbReference type="Ensembl" id="ENSMUST00000216753.3">
    <property type="protein sequence ID" value="ENSMUSP00000149648.2"/>
    <property type="gene ID" value="ENSMUSG00000111021.3"/>
</dbReference>
<dbReference type="Ensembl" id="ENSMUST00000217041.3">
    <property type="protein sequence ID" value="ENSMUSP00000149484.2"/>
    <property type="gene ID" value="ENSMUSG00000111021.3"/>
</dbReference>
<dbReference type="GeneID" id="18350"/>
<dbReference type="KEGG" id="mmu:18350"/>
<dbReference type="UCSC" id="uc008jlx.1">
    <property type="organism name" value="mouse"/>
</dbReference>
<dbReference type="AGR" id="MGI:1333746"/>
<dbReference type="CTD" id="18350"/>
<dbReference type="MGI" id="MGI:1333746">
    <property type="gene designation" value="Or1j21"/>
</dbReference>
<dbReference type="VEuPathDB" id="HostDB:ENSMUSG00000111021"/>
<dbReference type="GeneTree" id="ENSGT00940000154381"/>
<dbReference type="HOGENOM" id="CLU_012526_1_3_1"/>
<dbReference type="InParanoid" id="Q8VGK5"/>
<dbReference type="OMA" id="YIFFADI"/>
<dbReference type="OrthoDB" id="9590981at2759"/>
<dbReference type="PhylomeDB" id="Q8VGK5"/>
<dbReference type="BioGRID-ORCS" id="18350">
    <property type="hits" value="1 hit in 70 CRISPR screens"/>
</dbReference>
<dbReference type="PRO" id="PR:Q8VGK5"/>
<dbReference type="Proteomes" id="UP000000589">
    <property type="component" value="Chromosome 2"/>
</dbReference>
<dbReference type="RNAct" id="Q8VGK5">
    <property type="molecule type" value="protein"/>
</dbReference>
<dbReference type="GO" id="GO:0016020">
    <property type="term" value="C:membrane"/>
    <property type="evidence" value="ECO:0000247"/>
    <property type="project" value="MGI"/>
</dbReference>
<dbReference type="GO" id="GO:0005886">
    <property type="term" value="C:plasma membrane"/>
    <property type="evidence" value="ECO:0007669"/>
    <property type="project" value="UniProtKB-SubCell"/>
</dbReference>
<dbReference type="GO" id="GO:0004930">
    <property type="term" value="F:G protein-coupled receptor activity"/>
    <property type="evidence" value="ECO:0007669"/>
    <property type="project" value="UniProtKB-KW"/>
</dbReference>
<dbReference type="GO" id="GO:0019840">
    <property type="term" value="F:isoprenoid binding"/>
    <property type="evidence" value="ECO:0000314"/>
    <property type="project" value="MGI"/>
</dbReference>
<dbReference type="GO" id="GO:0004984">
    <property type="term" value="F:olfactory receptor activity"/>
    <property type="evidence" value="ECO:0000314"/>
    <property type="project" value="MGI"/>
</dbReference>
<dbReference type="GO" id="GO:0007186">
    <property type="term" value="P:G protein-coupled receptor signaling pathway"/>
    <property type="evidence" value="ECO:0000247"/>
    <property type="project" value="MGI"/>
</dbReference>
<dbReference type="GO" id="GO:0007608">
    <property type="term" value="P:sensory perception of smell"/>
    <property type="evidence" value="ECO:0000247"/>
    <property type="project" value="MGI"/>
</dbReference>
<dbReference type="FunFam" id="1.20.1070.10:FF:000009">
    <property type="entry name" value="Olfactory receptor"/>
    <property type="match status" value="1"/>
</dbReference>
<dbReference type="Gene3D" id="1.20.1070.10">
    <property type="entry name" value="Rhodopsin 7-helix transmembrane proteins"/>
    <property type="match status" value="1"/>
</dbReference>
<dbReference type="InterPro" id="IPR000276">
    <property type="entry name" value="GPCR_Rhodpsn"/>
</dbReference>
<dbReference type="InterPro" id="IPR017452">
    <property type="entry name" value="GPCR_Rhodpsn_7TM"/>
</dbReference>
<dbReference type="InterPro" id="IPR000725">
    <property type="entry name" value="Olfact_rcpt"/>
</dbReference>
<dbReference type="PANTHER" id="PTHR48001">
    <property type="entry name" value="OLFACTORY RECEPTOR"/>
    <property type="match status" value="1"/>
</dbReference>
<dbReference type="Pfam" id="PF13853">
    <property type="entry name" value="7tm_4"/>
    <property type="match status" value="1"/>
</dbReference>
<dbReference type="PRINTS" id="PR00237">
    <property type="entry name" value="GPCRRHODOPSN"/>
</dbReference>
<dbReference type="PRINTS" id="PR00245">
    <property type="entry name" value="OLFACTORYR"/>
</dbReference>
<dbReference type="SUPFAM" id="SSF81321">
    <property type="entry name" value="Family A G protein-coupled receptor-like"/>
    <property type="match status" value="1"/>
</dbReference>
<dbReference type="PROSITE" id="PS00237">
    <property type="entry name" value="G_PROTEIN_RECEP_F1_1"/>
    <property type="match status" value="1"/>
</dbReference>
<dbReference type="PROSITE" id="PS50262">
    <property type="entry name" value="G_PROTEIN_RECEP_F1_2"/>
    <property type="match status" value="1"/>
</dbReference>
<gene>
    <name evidence="11" type="primary">Or1j21</name>
    <name evidence="8" type="synonym">Mor136-6</name>
    <name evidence="9 11" type="synonym">Olfr50</name>
</gene>
<accession>Q8VGK5</accession>
<accession>Q9Z1U9</accession>
<organism>
    <name type="scientific">Mus musculus</name>
    <name type="common">Mouse</name>
    <dbReference type="NCBI Taxonomy" id="10090"/>
    <lineage>
        <taxon>Eukaryota</taxon>
        <taxon>Metazoa</taxon>
        <taxon>Chordata</taxon>
        <taxon>Craniata</taxon>
        <taxon>Vertebrata</taxon>
        <taxon>Euteleostomi</taxon>
        <taxon>Mammalia</taxon>
        <taxon>Eutheria</taxon>
        <taxon>Euarchontoglires</taxon>
        <taxon>Glires</taxon>
        <taxon>Rodentia</taxon>
        <taxon>Myomorpha</taxon>
        <taxon>Muroidea</taxon>
        <taxon>Muridae</taxon>
        <taxon>Murinae</taxon>
        <taxon>Mus</taxon>
        <taxon>Mus</taxon>
    </lineage>
</organism>
<evidence type="ECO:0000255" key="1"/>
<evidence type="ECO:0000255" key="2">
    <source>
        <dbReference type="PROSITE-ProRule" id="PRU00521"/>
    </source>
</evidence>
<evidence type="ECO:0000269" key="3">
    <source>
    </source>
</evidence>
<evidence type="ECO:0000303" key="4">
    <source>
    </source>
</evidence>
<evidence type="ECO:0000305" key="5"/>
<evidence type="ECO:0000312" key="6">
    <source>
        <dbReference type="EMBL" id="AAD13316.1"/>
    </source>
</evidence>
<evidence type="ECO:0000312" key="7">
    <source>
        <dbReference type="EMBL" id="AAI27979.1"/>
    </source>
</evidence>
<evidence type="ECO:0000312" key="8">
    <source>
        <dbReference type="EMBL" id="AAL60805.1"/>
    </source>
</evidence>
<evidence type="ECO:0000312" key="9">
    <source>
        <dbReference type="EMBL" id="AAP70882.1"/>
    </source>
</evidence>
<evidence type="ECO:0000312" key="10">
    <source>
        <dbReference type="EMBL" id="EDL08685.1"/>
    </source>
</evidence>
<evidence type="ECO:0000312" key="11">
    <source>
        <dbReference type="MGI" id="MGI:1333746"/>
    </source>
</evidence>
<keyword id="KW-1003">Cell membrane</keyword>
<keyword id="KW-0297">G-protein coupled receptor</keyword>
<keyword id="KW-0472">Membrane</keyword>
<keyword id="KW-0552">Olfaction</keyword>
<keyword id="KW-0675">Receptor</keyword>
<keyword id="KW-1185">Reference proteome</keyword>
<keyword id="KW-0716">Sensory transduction</keyword>
<keyword id="KW-0807">Transducer</keyword>
<keyword id="KW-0812">Transmembrane</keyword>
<keyword id="KW-1133">Transmembrane helix</keyword>
<feature type="chain" id="PRO_0000422154" description="Olfactory receptor 1J21">
    <location>
        <begin position="1"/>
        <end position="312"/>
    </location>
</feature>
<feature type="transmembrane region" description="Helical" evidence="1">
    <location>
        <begin position="29"/>
        <end position="49"/>
    </location>
</feature>
<feature type="transmembrane region" description="Helical" evidence="1">
    <location>
        <begin position="58"/>
        <end position="78"/>
    </location>
</feature>
<feature type="transmembrane region" description="Helical" evidence="1">
    <location>
        <begin position="95"/>
        <end position="115"/>
    </location>
</feature>
<feature type="transmembrane region" description="Helical" evidence="1">
    <location>
        <begin position="143"/>
        <end position="163"/>
    </location>
</feature>
<feature type="transmembrane region" description="Helical" evidence="1">
    <location>
        <begin position="197"/>
        <end position="217"/>
    </location>
</feature>
<feature type="transmembrane region" description="Helical" evidence="1">
    <location>
        <begin position="241"/>
        <end position="261"/>
    </location>
</feature>
<feature type="transmembrane region" description="Helical" evidence="1">
    <location>
        <begin position="272"/>
        <end position="292"/>
    </location>
</feature>
<feature type="sequence conflict" description="In Ref. 6; AAD13316." evidence="5" ref="6">
    <original>I</original>
    <variation>M</variation>
    <location>
        <position position="221"/>
    </location>
</feature>
<comment type="function">
    <text evidence="3">Odorant receptor. Activated by (+) and (-)-carvone.</text>
</comment>
<comment type="subcellular location">
    <subcellularLocation>
        <location evidence="5">Cell membrane</location>
        <topology evidence="1">Multi-pass membrane protein</topology>
    </subcellularLocation>
</comment>
<comment type="similarity">
    <text evidence="2">Belongs to the G-protein coupled receptor 1 family.</text>
</comment>
<proteinExistence type="evidence at transcript level"/>
<name>O1J21_MOUSE</name>
<protein>
    <recommendedName>
        <fullName evidence="5">Olfactory receptor 1J21</fullName>
    </recommendedName>
    <alternativeName>
        <fullName>Olfactory receptor 136-6</fullName>
    </alternativeName>
    <alternativeName>
        <fullName evidence="7">Olfactory receptor 50</fullName>
    </alternativeName>
    <alternativeName>
        <fullName evidence="4">Olfactory receptor I-D3</fullName>
    </alternativeName>
</protein>